<feature type="chain" id="PRO_0000242099" description="Arginine--tRNA ligase">
    <location>
        <begin position="1"/>
        <end position="563"/>
    </location>
</feature>
<feature type="short sequence motif" description="'HIGH' region">
    <location>
        <begin position="121"/>
        <end position="131"/>
    </location>
</feature>
<proteinExistence type="inferred from homology"/>
<evidence type="ECO:0000255" key="1">
    <source>
        <dbReference type="HAMAP-Rule" id="MF_00123"/>
    </source>
</evidence>
<keyword id="KW-0030">Aminoacyl-tRNA synthetase</keyword>
<keyword id="KW-0067">ATP-binding</keyword>
<keyword id="KW-0963">Cytoplasm</keyword>
<keyword id="KW-0436">Ligase</keyword>
<keyword id="KW-0547">Nucleotide-binding</keyword>
<keyword id="KW-0648">Protein biosynthesis</keyword>
<dbReference type="EC" id="6.1.1.19" evidence="1"/>
<dbReference type="EMBL" id="CP000114">
    <property type="protein sequence ID" value="ABA45443.1"/>
    <property type="molecule type" value="Genomic_DNA"/>
</dbReference>
<dbReference type="RefSeq" id="WP_000379866.1">
    <property type="nucleotide sequence ID" value="NC_007432.1"/>
</dbReference>
<dbReference type="SMR" id="Q3JYM1"/>
<dbReference type="KEGG" id="sak:SAK_2042"/>
<dbReference type="HOGENOM" id="CLU_006406_6_1_9"/>
<dbReference type="GO" id="GO:0005737">
    <property type="term" value="C:cytoplasm"/>
    <property type="evidence" value="ECO:0007669"/>
    <property type="project" value="UniProtKB-SubCell"/>
</dbReference>
<dbReference type="GO" id="GO:0004814">
    <property type="term" value="F:arginine-tRNA ligase activity"/>
    <property type="evidence" value="ECO:0007669"/>
    <property type="project" value="UniProtKB-UniRule"/>
</dbReference>
<dbReference type="GO" id="GO:0005524">
    <property type="term" value="F:ATP binding"/>
    <property type="evidence" value="ECO:0007669"/>
    <property type="project" value="UniProtKB-UniRule"/>
</dbReference>
<dbReference type="GO" id="GO:0006420">
    <property type="term" value="P:arginyl-tRNA aminoacylation"/>
    <property type="evidence" value="ECO:0007669"/>
    <property type="project" value="UniProtKB-UniRule"/>
</dbReference>
<dbReference type="CDD" id="cd07956">
    <property type="entry name" value="Anticodon_Ia_Arg"/>
    <property type="match status" value="1"/>
</dbReference>
<dbReference type="CDD" id="cd00671">
    <property type="entry name" value="ArgRS_core"/>
    <property type="match status" value="1"/>
</dbReference>
<dbReference type="FunFam" id="3.40.50.620:FF:000116">
    <property type="entry name" value="Arginine--tRNA ligase"/>
    <property type="match status" value="1"/>
</dbReference>
<dbReference type="FunFam" id="1.10.730.10:FF:000006">
    <property type="entry name" value="Arginyl-tRNA synthetase 2, mitochondrial"/>
    <property type="match status" value="1"/>
</dbReference>
<dbReference type="Gene3D" id="3.30.1360.70">
    <property type="entry name" value="Arginyl tRNA synthetase N-terminal domain"/>
    <property type="match status" value="1"/>
</dbReference>
<dbReference type="Gene3D" id="3.40.50.620">
    <property type="entry name" value="HUPs"/>
    <property type="match status" value="1"/>
</dbReference>
<dbReference type="Gene3D" id="1.10.730.10">
    <property type="entry name" value="Isoleucyl-tRNA Synthetase, Domain 1"/>
    <property type="match status" value="1"/>
</dbReference>
<dbReference type="HAMAP" id="MF_00123">
    <property type="entry name" value="Arg_tRNA_synth"/>
    <property type="match status" value="1"/>
</dbReference>
<dbReference type="InterPro" id="IPR001278">
    <property type="entry name" value="Arg-tRNA-ligase"/>
</dbReference>
<dbReference type="InterPro" id="IPR005148">
    <property type="entry name" value="Arg-tRNA-synth_N"/>
</dbReference>
<dbReference type="InterPro" id="IPR036695">
    <property type="entry name" value="Arg-tRNA-synth_N_sf"/>
</dbReference>
<dbReference type="InterPro" id="IPR035684">
    <property type="entry name" value="ArgRS_core"/>
</dbReference>
<dbReference type="InterPro" id="IPR008909">
    <property type="entry name" value="DALR_anticod-bd"/>
</dbReference>
<dbReference type="InterPro" id="IPR014729">
    <property type="entry name" value="Rossmann-like_a/b/a_fold"/>
</dbReference>
<dbReference type="InterPro" id="IPR009080">
    <property type="entry name" value="tRNAsynth_Ia_anticodon-bd"/>
</dbReference>
<dbReference type="NCBIfam" id="TIGR00456">
    <property type="entry name" value="argS"/>
    <property type="match status" value="1"/>
</dbReference>
<dbReference type="PANTHER" id="PTHR11956:SF5">
    <property type="entry name" value="ARGININE--TRNA LIGASE, CYTOPLASMIC"/>
    <property type="match status" value="1"/>
</dbReference>
<dbReference type="PANTHER" id="PTHR11956">
    <property type="entry name" value="ARGINYL-TRNA SYNTHETASE"/>
    <property type="match status" value="1"/>
</dbReference>
<dbReference type="Pfam" id="PF03485">
    <property type="entry name" value="Arg_tRNA_synt_N"/>
    <property type="match status" value="1"/>
</dbReference>
<dbReference type="Pfam" id="PF05746">
    <property type="entry name" value="DALR_1"/>
    <property type="match status" value="1"/>
</dbReference>
<dbReference type="Pfam" id="PF00750">
    <property type="entry name" value="tRNA-synt_1d"/>
    <property type="match status" value="1"/>
</dbReference>
<dbReference type="PRINTS" id="PR01038">
    <property type="entry name" value="TRNASYNTHARG"/>
</dbReference>
<dbReference type="SMART" id="SM01016">
    <property type="entry name" value="Arg_tRNA_synt_N"/>
    <property type="match status" value="1"/>
</dbReference>
<dbReference type="SMART" id="SM00836">
    <property type="entry name" value="DALR_1"/>
    <property type="match status" value="1"/>
</dbReference>
<dbReference type="SUPFAM" id="SSF47323">
    <property type="entry name" value="Anticodon-binding domain of a subclass of class I aminoacyl-tRNA synthetases"/>
    <property type="match status" value="1"/>
</dbReference>
<dbReference type="SUPFAM" id="SSF55190">
    <property type="entry name" value="Arginyl-tRNA synthetase (ArgRS), N-terminal 'additional' domain"/>
    <property type="match status" value="1"/>
</dbReference>
<dbReference type="SUPFAM" id="SSF52374">
    <property type="entry name" value="Nucleotidylyl transferase"/>
    <property type="match status" value="1"/>
</dbReference>
<reference key="1">
    <citation type="journal article" date="2005" name="Proc. Natl. Acad. Sci. U.S.A.">
        <title>Genome analysis of multiple pathogenic isolates of Streptococcus agalactiae: implications for the microbial 'pan-genome'.</title>
        <authorList>
            <person name="Tettelin H."/>
            <person name="Masignani V."/>
            <person name="Cieslewicz M.J."/>
            <person name="Donati C."/>
            <person name="Medini D."/>
            <person name="Ward N.L."/>
            <person name="Angiuoli S.V."/>
            <person name="Crabtree J."/>
            <person name="Jones A.L."/>
            <person name="Durkin A.S."/>
            <person name="DeBoy R.T."/>
            <person name="Davidsen T.M."/>
            <person name="Mora M."/>
            <person name="Scarselli M."/>
            <person name="Margarit y Ros I."/>
            <person name="Peterson J.D."/>
            <person name="Hauser C.R."/>
            <person name="Sundaram J.P."/>
            <person name="Nelson W.C."/>
            <person name="Madupu R."/>
            <person name="Brinkac L.M."/>
            <person name="Dodson R.J."/>
            <person name="Rosovitz M.J."/>
            <person name="Sullivan S.A."/>
            <person name="Daugherty S.C."/>
            <person name="Haft D.H."/>
            <person name="Selengut J."/>
            <person name="Gwinn M.L."/>
            <person name="Zhou L."/>
            <person name="Zafar N."/>
            <person name="Khouri H."/>
            <person name="Radune D."/>
            <person name="Dimitrov G."/>
            <person name="Watkins K."/>
            <person name="O'Connor K.J."/>
            <person name="Smith S."/>
            <person name="Utterback T.R."/>
            <person name="White O."/>
            <person name="Rubens C.E."/>
            <person name="Grandi G."/>
            <person name="Madoff L.C."/>
            <person name="Kasper D.L."/>
            <person name="Telford J.L."/>
            <person name="Wessels M.R."/>
            <person name="Rappuoli R."/>
            <person name="Fraser C.M."/>
        </authorList>
    </citation>
    <scope>NUCLEOTIDE SEQUENCE [LARGE SCALE GENOMIC DNA]</scope>
    <source>
        <strain>ATCC 27591 / A909 / CDC SS700</strain>
    </source>
</reference>
<sequence>MDTKHLIASEIQKVVPDMEQSTILSLLETPKNSSMGDLAFPAFSLAKTLRKAPQIIASDIAEQIKSDQFEKVEAVGPYVNFFLDKAAISSQVLKQVLSDGSAYATQNIGEGRNVAIDMSSPNIAKPFSIGHLRSTVIGDSLANIFDKIGYHPVKINHLGDWGKQFGMLIVAYKKWGNEEAVRAHPIDELLKLYVRINAEAETDPSVDEEAREWFRKLEANDPEATELWQWFRDESLLEFNRLYDKMNVTFDSYNGEAFYNDKMEEVLELLESKNLLVESKGAQVVNLEKYGIEHPALIKKSDGATLYITRDLAAALYRRRTYDFAKSIYVVGNEQSAHFKQLKAVLKEMDYDWSDDMTHVPFGLVTKGGAKLSTRKGNVILLEPTVAEAINRAASQIEAKNPNLADKDKVAQAVGVGAIKFYDLKTDRTNGYDFDLEAMVSFEGETGPYVQYAHARIQSILRKANFNPSNSDNYSLNDVESWEIIKLIQDFPRIIVRAADNFEPSIIAKFAINLAQCFNKYYAHTRILDEDAEISSRLALCYATATVLKESLRLLGVDAPNEM</sequence>
<comment type="catalytic activity">
    <reaction evidence="1">
        <text>tRNA(Arg) + L-arginine + ATP = L-arginyl-tRNA(Arg) + AMP + diphosphate</text>
        <dbReference type="Rhea" id="RHEA:20301"/>
        <dbReference type="Rhea" id="RHEA-COMP:9658"/>
        <dbReference type="Rhea" id="RHEA-COMP:9673"/>
        <dbReference type="ChEBI" id="CHEBI:30616"/>
        <dbReference type="ChEBI" id="CHEBI:32682"/>
        <dbReference type="ChEBI" id="CHEBI:33019"/>
        <dbReference type="ChEBI" id="CHEBI:78442"/>
        <dbReference type="ChEBI" id="CHEBI:78513"/>
        <dbReference type="ChEBI" id="CHEBI:456215"/>
        <dbReference type="EC" id="6.1.1.19"/>
    </reaction>
</comment>
<comment type="subunit">
    <text evidence="1">Monomer.</text>
</comment>
<comment type="subcellular location">
    <subcellularLocation>
        <location evidence="1">Cytoplasm</location>
    </subcellularLocation>
</comment>
<comment type="similarity">
    <text evidence="1">Belongs to the class-I aminoacyl-tRNA synthetase family.</text>
</comment>
<accession>Q3JYM1</accession>
<organism>
    <name type="scientific">Streptococcus agalactiae serotype Ia (strain ATCC 27591 / A909 / CDC SS700)</name>
    <dbReference type="NCBI Taxonomy" id="205921"/>
    <lineage>
        <taxon>Bacteria</taxon>
        <taxon>Bacillati</taxon>
        <taxon>Bacillota</taxon>
        <taxon>Bacilli</taxon>
        <taxon>Lactobacillales</taxon>
        <taxon>Streptococcaceae</taxon>
        <taxon>Streptococcus</taxon>
    </lineage>
</organism>
<gene>
    <name evidence="1" type="primary">argS</name>
    <name type="ordered locus">SAK_2042</name>
</gene>
<protein>
    <recommendedName>
        <fullName evidence="1">Arginine--tRNA ligase</fullName>
        <ecNumber evidence="1">6.1.1.19</ecNumber>
    </recommendedName>
    <alternativeName>
        <fullName evidence="1">Arginyl-tRNA synthetase</fullName>
        <shortName evidence="1">ArgRS</shortName>
    </alternativeName>
</protein>
<name>SYR_STRA1</name>